<accession>Q6FKN8</accession>
<sequence>MSATEDKKDPASMLAELKLDKDEGNKTPETKTPESNSAETKTTEEVKELKNPFTQKKEDVENDAAEEKTNEVNKDDAKDERENKDTNLIKSEYEVKVNLADLQADPNSPLYSVKSFDELGLSPELLKGIYAMKFQKPSKIQERALPLLLSNPPRNMIAQSQSGTGKTAAFSLTMLSRVDETQNVPQAICLAPSRELARQTLEVIQEMGKYTKITTQLIVPDSFEKNTKINANVVVGTPGTLLDLIRRKLIQLQNVKIFVLDEADNMLDKQGLGDQCIRVKKFLPKDTQLVLFSATFADAVKAYAQKVIPNANTLELQRNEVNVKAIKQLYMDCNDEAHKYEVLCELYGLLTIGSSIIFVAKKDTANLLYGKLKHEGHQVSILHSDLRTDERDRLIDDFREGRSKVLITTNVLARGIDIPSVSMVVNYDLPTLPNGMPDYATYVHRIGRTGRFGRTGVAISFVHDKKSFKILSAIQDYFKDIELTRVPTDDWDEVEDIVKKVLKQ</sequence>
<evidence type="ECO:0000250" key="1"/>
<evidence type="ECO:0000255" key="2">
    <source>
        <dbReference type="PROSITE-ProRule" id="PRU00541"/>
    </source>
</evidence>
<evidence type="ECO:0000255" key="3">
    <source>
        <dbReference type="PROSITE-ProRule" id="PRU00542"/>
    </source>
</evidence>
<evidence type="ECO:0000256" key="4">
    <source>
        <dbReference type="SAM" id="MobiDB-lite"/>
    </source>
</evidence>
<evidence type="ECO:0000305" key="5"/>
<keyword id="KW-0067">ATP-binding</keyword>
<keyword id="KW-0963">Cytoplasm</keyword>
<keyword id="KW-0347">Helicase</keyword>
<keyword id="KW-0378">Hydrolase</keyword>
<keyword id="KW-0472">Membrane</keyword>
<keyword id="KW-0509">mRNA transport</keyword>
<keyword id="KW-0906">Nuclear pore complex</keyword>
<keyword id="KW-0547">Nucleotide-binding</keyword>
<keyword id="KW-0539">Nucleus</keyword>
<keyword id="KW-0653">Protein transport</keyword>
<keyword id="KW-1185">Reference proteome</keyword>
<keyword id="KW-0694">RNA-binding</keyword>
<keyword id="KW-0811">Translocation</keyword>
<keyword id="KW-0813">Transport</keyword>
<organism>
    <name type="scientific">Candida glabrata (strain ATCC 2001 / BCRC 20586 / JCM 3761 / NBRC 0622 / NRRL Y-65 / CBS 138)</name>
    <name type="common">Yeast</name>
    <name type="synonym">Nakaseomyces glabratus</name>
    <dbReference type="NCBI Taxonomy" id="284593"/>
    <lineage>
        <taxon>Eukaryota</taxon>
        <taxon>Fungi</taxon>
        <taxon>Dikarya</taxon>
        <taxon>Ascomycota</taxon>
        <taxon>Saccharomycotina</taxon>
        <taxon>Saccharomycetes</taxon>
        <taxon>Saccharomycetales</taxon>
        <taxon>Saccharomycetaceae</taxon>
        <taxon>Nakaseomyces</taxon>
    </lineage>
</organism>
<feature type="chain" id="PRO_0000232220" description="ATP-dependent RNA helicase DBP5">
    <location>
        <begin position="1"/>
        <end position="504"/>
    </location>
</feature>
<feature type="domain" description="Helicase ATP-binding" evidence="2">
    <location>
        <begin position="147"/>
        <end position="314"/>
    </location>
</feature>
<feature type="domain" description="Helicase C-terminal" evidence="3">
    <location>
        <begin position="325"/>
        <end position="502"/>
    </location>
</feature>
<feature type="region of interest" description="Disordered" evidence="4">
    <location>
        <begin position="1"/>
        <end position="85"/>
    </location>
</feature>
<feature type="short sequence motif" description="Q motif">
    <location>
        <begin position="114"/>
        <end position="142"/>
    </location>
</feature>
<feature type="short sequence motif" description="DEAD box">
    <location>
        <begin position="261"/>
        <end position="264"/>
    </location>
</feature>
<feature type="compositionally biased region" description="Basic and acidic residues" evidence="4">
    <location>
        <begin position="1"/>
        <end position="10"/>
    </location>
</feature>
<feature type="compositionally biased region" description="Basic and acidic residues" evidence="4">
    <location>
        <begin position="17"/>
        <end position="32"/>
    </location>
</feature>
<feature type="compositionally biased region" description="Basic and acidic residues" evidence="4">
    <location>
        <begin position="41"/>
        <end position="85"/>
    </location>
</feature>
<feature type="binding site" evidence="2">
    <location>
        <begin position="160"/>
        <end position="167"/>
    </location>
    <ligand>
        <name>ATP</name>
        <dbReference type="ChEBI" id="CHEBI:30616"/>
    </ligand>
</feature>
<gene>
    <name type="primary">DBP5</name>
    <name type="ordered locus">CAGL0L10021g</name>
</gene>
<dbReference type="EC" id="3.6.4.13"/>
<dbReference type="EMBL" id="CR380958">
    <property type="protein sequence ID" value="CAG62178.1"/>
    <property type="molecule type" value="Genomic_DNA"/>
</dbReference>
<dbReference type="RefSeq" id="XP_449206.1">
    <property type="nucleotide sequence ID" value="XM_449206.1"/>
</dbReference>
<dbReference type="SMR" id="Q6FKN8"/>
<dbReference type="FunCoup" id="Q6FKN8">
    <property type="interactions" value="837"/>
</dbReference>
<dbReference type="STRING" id="284593.Q6FKN8"/>
<dbReference type="EnsemblFungi" id="CAGL0L10021g-T">
    <property type="protein sequence ID" value="CAGL0L10021g-T-p1"/>
    <property type="gene ID" value="CAGL0L10021g"/>
</dbReference>
<dbReference type="KEGG" id="cgr:2891053"/>
<dbReference type="CGD" id="CAL0135432">
    <property type="gene designation" value="CAGL0L10021g"/>
</dbReference>
<dbReference type="VEuPathDB" id="FungiDB:B1J91_L10021g"/>
<dbReference type="VEuPathDB" id="FungiDB:CAGL0L10021g"/>
<dbReference type="eggNOG" id="KOG0332">
    <property type="taxonomic scope" value="Eukaryota"/>
</dbReference>
<dbReference type="HOGENOM" id="CLU_003041_1_0_1"/>
<dbReference type="InParanoid" id="Q6FKN8"/>
<dbReference type="OMA" id="IAAETRW"/>
<dbReference type="Proteomes" id="UP000002428">
    <property type="component" value="Chromosome L"/>
</dbReference>
<dbReference type="GO" id="GO:0005934">
    <property type="term" value="C:cellular bud tip"/>
    <property type="evidence" value="ECO:0007669"/>
    <property type="project" value="EnsemblFungi"/>
</dbReference>
<dbReference type="GO" id="GO:0010494">
    <property type="term" value="C:cytoplasmic stress granule"/>
    <property type="evidence" value="ECO:0007669"/>
    <property type="project" value="EnsemblFungi"/>
</dbReference>
<dbReference type="GO" id="GO:0031965">
    <property type="term" value="C:nuclear membrane"/>
    <property type="evidence" value="ECO:0007669"/>
    <property type="project" value="UniProtKB-SubCell"/>
</dbReference>
<dbReference type="GO" id="GO:0044614">
    <property type="term" value="C:nuclear pore cytoplasmic filaments"/>
    <property type="evidence" value="ECO:0007669"/>
    <property type="project" value="EnsemblFungi"/>
</dbReference>
<dbReference type="GO" id="GO:0005524">
    <property type="term" value="F:ATP binding"/>
    <property type="evidence" value="ECO:0007669"/>
    <property type="project" value="UniProtKB-KW"/>
</dbReference>
<dbReference type="GO" id="GO:0016887">
    <property type="term" value="F:ATP hydrolysis activity"/>
    <property type="evidence" value="ECO:0007669"/>
    <property type="project" value="RHEA"/>
</dbReference>
<dbReference type="GO" id="GO:0000822">
    <property type="term" value="F:inositol hexakisphosphate binding"/>
    <property type="evidence" value="ECO:0007669"/>
    <property type="project" value="EnsemblFungi"/>
</dbReference>
<dbReference type="GO" id="GO:0003723">
    <property type="term" value="F:RNA binding"/>
    <property type="evidence" value="ECO:0007669"/>
    <property type="project" value="UniProtKB-KW"/>
</dbReference>
<dbReference type="GO" id="GO:0003724">
    <property type="term" value="F:RNA helicase activity"/>
    <property type="evidence" value="ECO:0007669"/>
    <property type="project" value="UniProtKB-EC"/>
</dbReference>
<dbReference type="GO" id="GO:0016973">
    <property type="term" value="P:poly(A)+ mRNA export from nucleus"/>
    <property type="evidence" value="ECO:0007669"/>
    <property type="project" value="EnsemblFungi"/>
</dbReference>
<dbReference type="GO" id="GO:0015031">
    <property type="term" value="P:protein transport"/>
    <property type="evidence" value="ECO:0007669"/>
    <property type="project" value="UniProtKB-KW"/>
</dbReference>
<dbReference type="GO" id="GO:0006415">
    <property type="term" value="P:translational termination"/>
    <property type="evidence" value="ECO:0007669"/>
    <property type="project" value="EnsemblFungi"/>
</dbReference>
<dbReference type="GO" id="GO:0006409">
    <property type="term" value="P:tRNA export from nucleus"/>
    <property type="evidence" value="ECO:0007669"/>
    <property type="project" value="EnsemblFungi"/>
</dbReference>
<dbReference type="CDD" id="cd17963">
    <property type="entry name" value="DEADc_DDX19_DDX25"/>
    <property type="match status" value="1"/>
</dbReference>
<dbReference type="CDD" id="cd18787">
    <property type="entry name" value="SF2_C_DEAD"/>
    <property type="match status" value="1"/>
</dbReference>
<dbReference type="FunFam" id="3.40.50.300:FF:000849">
    <property type="entry name" value="ATP-dependent RNA helicase DBP5"/>
    <property type="match status" value="1"/>
</dbReference>
<dbReference type="FunFam" id="3.40.50.300:FF:000318">
    <property type="entry name" value="ATP-dependent RNA helicase DDX19B"/>
    <property type="match status" value="1"/>
</dbReference>
<dbReference type="Gene3D" id="3.40.50.300">
    <property type="entry name" value="P-loop containing nucleotide triphosphate hydrolases"/>
    <property type="match status" value="2"/>
</dbReference>
<dbReference type="InterPro" id="IPR011545">
    <property type="entry name" value="DEAD/DEAH_box_helicase_dom"/>
</dbReference>
<dbReference type="InterPro" id="IPR014001">
    <property type="entry name" value="Helicase_ATP-bd"/>
</dbReference>
<dbReference type="InterPro" id="IPR001650">
    <property type="entry name" value="Helicase_C-like"/>
</dbReference>
<dbReference type="InterPro" id="IPR027417">
    <property type="entry name" value="P-loop_NTPase"/>
</dbReference>
<dbReference type="InterPro" id="IPR000629">
    <property type="entry name" value="RNA-helicase_DEAD-box_CS"/>
</dbReference>
<dbReference type="InterPro" id="IPR014014">
    <property type="entry name" value="RNA_helicase_DEAD_Q_motif"/>
</dbReference>
<dbReference type="PANTHER" id="PTHR47958">
    <property type="entry name" value="ATP-DEPENDENT RNA HELICASE DBP3"/>
    <property type="match status" value="1"/>
</dbReference>
<dbReference type="Pfam" id="PF00270">
    <property type="entry name" value="DEAD"/>
    <property type="match status" value="1"/>
</dbReference>
<dbReference type="Pfam" id="PF00271">
    <property type="entry name" value="Helicase_C"/>
    <property type="match status" value="1"/>
</dbReference>
<dbReference type="SMART" id="SM00487">
    <property type="entry name" value="DEXDc"/>
    <property type="match status" value="1"/>
</dbReference>
<dbReference type="SMART" id="SM00490">
    <property type="entry name" value="HELICc"/>
    <property type="match status" value="1"/>
</dbReference>
<dbReference type="SUPFAM" id="SSF52540">
    <property type="entry name" value="P-loop containing nucleoside triphosphate hydrolases"/>
    <property type="match status" value="1"/>
</dbReference>
<dbReference type="PROSITE" id="PS00039">
    <property type="entry name" value="DEAD_ATP_HELICASE"/>
    <property type="match status" value="1"/>
</dbReference>
<dbReference type="PROSITE" id="PS51192">
    <property type="entry name" value="HELICASE_ATP_BIND_1"/>
    <property type="match status" value="1"/>
</dbReference>
<dbReference type="PROSITE" id="PS51194">
    <property type="entry name" value="HELICASE_CTER"/>
    <property type="match status" value="1"/>
</dbReference>
<dbReference type="PROSITE" id="PS51195">
    <property type="entry name" value="Q_MOTIF"/>
    <property type="match status" value="1"/>
</dbReference>
<name>DBP5_CANGA</name>
<comment type="function">
    <text evidence="1">ATP-dependent RNA helicase associated with the nuclear pore complex and essential for mRNA export from the nucleus. May participate in a terminal step of mRNA export through the removal of proteins that accompany mRNA through the nucleopore complex. May also be involved in early transcription (By similarity).</text>
</comment>
<comment type="catalytic activity">
    <reaction>
        <text>ATP + H2O = ADP + phosphate + H(+)</text>
        <dbReference type="Rhea" id="RHEA:13065"/>
        <dbReference type="ChEBI" id="CHEBI:15377"/>
        <dbReference type="ChEBI" id="CHEBI:15378"/>
        <dbReference type="ChEBI" id="CHEBI:30616"/>
        <dbReference type="ChEBI" id="CHEBI:43474"/>
        <dbReference type="ChEBI" id="CHEBI:456216"/>
        <dbReference type="EC" id="3.6.4.13"/>
    </reaction>
</comment>
<comment type="subunit">
    <text evidence="1">Associates with the nuclear pore complex.</text>
</comment>
<comment type="subcellular location">
    <subcellularLocation>
        <location evidence="1">Cytoplasm</location>
    </subcellularLocation>
    <subcellularLocation>
        <location>Nucleus</location>
        <location>Nuclear pore complex</location>
    </subcellularLocation>
    <subcellularLocation>
        <location evidence="1">Nucleus membrane</location>
        <topology evidence="1">Peripheral membrane protein</topology>
        <orientation evidence="1">Cytoplasmic side</orientation>
    </subcellularLocation>
    <text evidence="1">Nuclear pore complex cytoplasmic fibrils.</text>
</comment>
<comment type="domain">
    <text>The Q motif is unique to and characteristic of the DEAD box family of RNA helicases and controls ATP binding and hydrolysis.</text>
</comment>
<comment type="similarity">
    <text evidence="5">Belongs to the DEAD box helicase family. DDX19/DBP5 subfamily.</text>
</comment>
<protein>
    <recommendedName>
        <fullName>ATP-dependent RNA helicase DBP5</fullName>
        <ecNumber>3.6.4.13</ecNumber>
    </recommendedName>
</protein>
<proteinExistence type="inferred from homology"/>
<reference key="1">
    <citation type="journal article" date="2004" name="Nature">
        <title>Genome evolution in yeasts.</title>
        <authorList>
            <person name="Dujon B."/>
            <person name="Sherman D."/>
            <person name="Fischer G."/>
            <person name="Durrens P."/>
            <person name="Casaregola S."/>
            <person name="Lafontaine I."/>
            <person name="de Montigny J."/>
            <person name="Marck C."/>
            <person name="Neuveglise C."/>
            <person name="Talla E."/>
            <person name="Goffard N."/>
            <person name="Frangeul L."/>
            <person name="Aigle M."/>
            <person name="Anthouard V."/>
            <person name="Babour A."/>
            <person name="Barbe V."/>
            <person name="Barnay S."/>
            <person name="Blanchin S."/>
            <person name="Beckerich J.-M."/>
            <person name="Beyne E."/>
            <person name="Bleykasten C."/>
            <person name="Boisrame A."/>
            <person name="Boyer J."/>
            <person name="Cattolico L."/>
            <person name="Confanioleri F."/>
            <person name="de Daruvar A."/>
            <person name="Despons L."/>
            <person name="Fabre E."/>
            <person name="Fairhead C."/>
            <person name="Ferry-Dumazet H."/>
            <person name="Groppi A."/>
            <person name="Hantraye F."/>
            <person name="Hennequin C."/>
            <person name="Jauniaux N."/>
            <person name="Joyet P."/>
            <person name="Kachouri R."/>
            <person name="Kerrest A."/>
            <person name="Koszul R."/>
            <person name="Lemaire M."/>
            <person name="Lesur I."/>
            <person name="Ma L."/>
            <person name="Muller H."/>
            <person name="Nicaud J.-M."/>
            <person name="Nikolski M."/>
            <person name="Oztas S."/>
            <person name="Ozier-Kalogeropoulos O."/>
            <person name="Pellenz S."/>
            <person name="Potier S."/>
            <person name="Richard G.-F."/>
            <person name="Straub M.-L."/>
            <person name="Suleau A."/>
            <person name="Swennen D."/>
            <person name="Tekaia F."/>
            <person name="Wesolowski-Louvel M."/>
            <person name="Westhof E."/>
            <person name="Wirth B."/>
            <person name="Zeniou-Meyer M."/>
            <person name="Zivanovic Y."/>
            <person name="Bolotin-Fukuhara M."/>
            <person name="Thierry A."/>
            <person name="Bouchier C."/>
            <person name="Caudron B."/>
            <person name="Scarpelli C."/>
            <person name="Gaillardin C."/>
            <person name="Weissenbach J."/>
            <person name="Wincker P."/>
            <person name="Souciet J.-L."/>
        </authorList>
    </citation>
    <scope>NUCLEOTIDE SEQUENCE [LARGE SCALE GENOMIC DNA]</scope>
    <source>
        <strain>ATCC 2001 / BCRC 20586 / JCM 3761 / NBRC 0622 / NRRL Y-65 / CBS 138</strain>
    </source>
</reference>